<feature type="chain" id="PRO_0000226080" description="ABC transporter C family member 9">
    <location>
        <begin position="1"/>
        <end position="1506"/>
    </location>
</feature>
<feature type="transmembrane region" description="Helical" evidence="3">
    <location>
        <begin position="37"/>
        <end position="57"/>
    </location>
</feature>
<feature type="transmembrane region" description="Helical" evidence="3">
    <location>
        <begin position="84"/>
        <end position="104"/>
    </location>
</feature>
<feature type="transmembrane region" description="Helical" evidence="3">
    <location>
        <begin position="116"/>
        <end position="136"/>
    </location>
</feature>
<feature type="transmembrane region" description="Helical" evidence="3">
    <location>
        <begin position="150"/>
        <end position="170"/>
    </location>
</feature>
<feature type="transmembrane region" description="Helical" evidence="3">
    <location>
        <begin position="179"/>
        <end position="199"/>
    </location>
</feature>
<feature type="transmembrane region" description="Helical" evidence="3">
    <location>
        <begin position="315"/>
        <end position="335"/>
    </location>
</feature>
<feature type="transmembrane region" description="Helical" evidence="3">
    <location>
        <begin position="350"/>
        <end position="370"/>
    </location>
</feature>
<feature type="transmembrane region" description="Helical" evidence="3">
    <location>
        <begin position="427"/>
        <end position="447"/>
    </location>
</feature>
<feature type="transmembrane region" description="Helical" evidence="3">
    <location>
        <begin position="452"/>
        <end position="472"/>
    </location>
</feature>
<feature type="transmembrane region" description="Helical" evidence="3">
    <location>
        <begin position="541"/>
        <end position="561"/>
    </location>
</feature>
<feature type="transmembrane region" description="Helical" evidence="3">
    <location>
        <begin position="567"/>
        <end position="587"/>
    </location>
</feature>
<feature type="transmembrane region" description="Helical" evidence="3">
    <location>
        <begin position="934"/>
        <end position="956"/>
    </location>
</feature>
<feature type="transmembrane region" description="Helical" evidence="3">
    <location>
        <begin position="976"/>
        <end position="996"/>
    </location>
</feature>
<feature type="transmembrane region" description="Helical" evidence="3">
    <location>
        <begin position="1048"/>
        <end position="1068"/>
    </location>
</feature>
<feature type="transmembrane region" description="Helical" evidence="3">
    <location>
        <begin position="1167"/>
        <end position="1187"/>
    </location>
</feature>
<feature type="transmembrane region" description="Helical" evidence="3">
    <location>
        <begin position="1191"/>
        <end position="1211"/>
    </location>
</feature>
<feature type="domain" description="ABC transmembrane type-1 1" evidence="3">
    <location>
        <begin position="314"/>
        <end position="596"/>
    </location>
</feature>
<feature type="domain" description="ABC transporter 1" evidence="2">
    <location>
        <begin position="630"/>
        <end position="853"/>
    </location>
</feature>
<feature type="domain" description="ABC transmembrane type-1 2" evidence="3">
    <location>
        <begin position="936"/>
        <end position="1218"/>
    </location>
</feature>
<feature type="domain" description="ABC transporter 2" evidence="2">
    <location>
        <begin position="1257"/>
        <end position="1489"/>
    </location>
</feature>
<feature type="binding site" evidence="2">
    <location>
        <begin position="665"/>
        <end position="672"/>
    </location>
    <ligand>
        <name>ATP</name>
        <dbReference type="ChEBI" id="CHEBI:30616"/>
        <label>1</label>
    </ligand>
</feature>
<feature type="binding site" evidence="2">
    <location>
        <begin position="1289"/>
        <end position="1296"/>
    </location>
    <ligand>
        <name>ATP</name>
        <dbReference type="ChEBI" id="CHEBI:30616"/>
        <label>2</label>
    </ligand>
</feature>
<name>AB9C_ARATH</name>
<sequence length="1506" mass="168210">MFKPFGFAAETGSHLLTTQWLQLGNSLCLKERISIAMQVTFLAFFLIHLALKWFGVVRNRGSNDVEEDLKKQSITVKQSFSYNISLLCSVSILGTHCFILLLLFRDSVVSRCDSSVSVFSAEVSQSFSWLFVSVVVVKIRERRLVKFPWMLRSWWLCSFILSFSFDAHFITAKHEPLEFQDYADLTGLLASLFLLAVSIRGKTGFHLLESSGNTEPLLLGDQTEQNKKDSYSSSSPYGNATLFQRITFSWINPLFSLGYKRPLEKDDVPDIDVKDSARFCSHAFDQKLKTTKEKEGPGNAFFYNSVLRYVWRKAAINAVFAVVNASTAYIGPYLINDFVEFLSEKQSQSLNHGYLLALGFLTAKIVETVTQRQWIFGARQLGLRLRAALISHIYQKGLVLSSQSRQSHTSGEIINYMSVDVQRITDFIWYVNNIWMLPIQIFSAIYILQKHLGLGALAALVTTLMVMACNYPLTRLQRNYQSDIMNAKDDRMKATSEILKNMKILKLQAWDNQFLNKVKTLRKKEYDCLWKSLRLQAFTTFILWGAPSLISVVTFVTCMLMGVKLTAGAVLSALATFQMLQSPIFGLPDLLSALVQSKVSADRIASYLQQSETQKDAVEYCSKDHTELSVEIENGAFSWEPESSRPTLDDIELKVKSGMKVAVCGAVGSGKSSLLSSILGEIQKLKGTVRVSGKQAYVPQSPWILSGTIRDNILFGSMYESEKYERTVKACALIKDFELFSNGDLTEIGERGINMSGGQKQRIQIARAVYQNADIYLLDDPFSAVDAHTGRELFEDCLMGILKDKTVLYVTHQVEFLPAADLILVMQNGRVMQAGKFEELLKQNIGFEVLVGAHNEALDSILSIEKSSRNFKEGSKDDTASIAESLQTHCDSEHNISTENKKKEAKLVQDEETEKGVIGKEVYLAYLTTVKGGLLVPFIILAQSCFQMLQIASNYWMAWTAPPTAESIPKLGMGRILLVYALLAAGSSLCVLARTILVAIGGLSTAETFFSRMLCSIFRAPMSFFDSTPTGRILNRASTDQSVLDLEMAVKLGWCAFSIIQIVGTIFVMSQVAWQVCVIFIPVAVACVFYQRYYTPTARELSRMSGVERAPILHHFAESLAGATTIRAFDQRDRFISSNLVLIDSHSRPWFHVASAMEWLSFRLNLLSHFVFAFSLVLLVTLPEGVINPSIAGLGVTYGLSLNVLQATVIWNICNAENKMISVERILQYSKIPSEAPLVIDGHRPLDNWPNVGSIVFRDLQVRYAEHFPAVLKNITCEFPGGKKIGVVGRTGSGKSTLIQALFRIVEPSQGTIVIDNVDITKIGLHDLRSRLGIIPQDPALFDGTIRLNLDPLAQYTDHEIWEAIDKCQLGDVIRAKDERLDATVVENGENWSVGQRQLVCLGRVLLKKSNILVLDEATASVDSATDGVIQKIINQEFKDRTVVTIAHRIHTVIESDLVLVLSDGRIAEFDSPAKLLQREDSFFSKLIKEYSLRSNHFAGSNDLLS</sequence>
<comment type="function">
    <text evidence="1">Pump for glutathione S-conjugates.</text>
</comment>
<comment type="catalytic activity">
    <reaction>
        <text>ATP + H2O + xenobioticSide 1 = ADP + phosphate + xenobioticSide 2.</text>
        <dbReference type="EC" id="7.6.2.2"/>
    </reaction>
</comment>
<comment type="subcellular location">
    <subcellularLocation>
        <location evidence="3">Membrane</location>
        <topology evidence="3">Multi-pass membrane protein</topology>
    </subcellularLocation>
</comment>
<comment type="tissue specificity">
    <text evidence="4">Ubiquitous.</text>
</comment>
<comment type="similarity">
    <text evidence="5">Belongs to the ABC transporter superfamily. ABCC family. Conjugate transporter (TC 3.A.1.208) subfamily.</text>
</comment>
<comment type="sequence caution" evidence="5">
    <conflict type="erroneous gene model prediction">
        <sequence resource="EMBL-CDS" id="CAB75931"/>
    </conflict>
</comment>
<organism>
    <name type="scientific">Arabidopsis thaliana</name>
    <name type="common">Mouse-ear cress</name>
    <dbReference type="NCBI Taxonomy" id="3702"/>
    <lineage>
        <taxon>Eukaryota</taxon>
        <taxon>Viridiplantae</taxon>
        <taxon>Streptophyta</taxon>
        <taxon>Embryophyta</taxon>
        <taxon>Tracheophyta</taxon>
        <taxon>Spermatophyta</taxon>
        <taxon>Magnoliopsida</taxon>
        <taxon>eudicotyledons</taxon>
        <taxon>Gunneridae</taxon>
        <taxon>Pentapetalae</taxon>
        <taxon>rosids</taxon>
        <taxon>malvids</taxon>
        <taxon>Brassicales</taxon>
        <taxon>Brassicaceae</taxon>
        <taxon>Camelineae</taxon>
        <taxon>Arabidopsis</taxon>
    </lineage>
</organism>
<reference key="1">
    <citation type="journal article" date="2000" name="Nature">
        <title>Sequence and analysis of chromosome 3 of the plant Arabidopsis thaliana.</title>
        <authorList>
            <person name="Salanoubat M."/>
            <person name="Lemcke K."/>
            <person name="Rieger M."/>
            <person name="Ansorge W."/>
            <person name="Unseld M."/>
            <person name="Fartmann B."/>
            <person name="Valle G."/>
            <person name="Bloecker H."/>
            <person name="Perez-Alonso M."/>
            <person name="Obermaier B."/>
            <person name="Delseny M."/>
            <person name="Boutry M."/>
            <person name="Grivell L.A."/>
            <person name="Mache R."/>
            <person name="Puigdomenech P."/>
            <person name="De Simone V."/>
            <person name="Choisne N."/>
            <person name="Artiguenave F."/>
            <person name="Robert C."/>
            <person name="Brottier P."/>
            <person name="Wincker P."/>
            <person name="Cattolico L."/>
            <person name="Weissenbach J."/>
            <person name="Saurin W."/>
            <person name="Quetier F."/>
            <person name="Schaefer M."/>
            <person name="Mueller-Auer S."/>
            <person name="Gabel C."/>
            <person name="Fuchs M."/>
            <person name="Benes V."/>
            <person name="Wurmbach E."/>
            <person name="Drzonek H."/>
            <person name="Erfle H."/>
            <person name="Jordan N."/>
            <person name="Bangert S."/>
            <person name="Wiedelmann R."/>
            <person name="Kranz H."/>
            <person name="Voss H."/>
            <person name="Holland R."/>
            <person name="Brandt P."/>
            <person name="Nyakatura G."/>
            <person name="Vezzi A."/>
            <person name="D'Angelo M."/>
            <person name="Pallavicini A."/>
            <person name="Toppo S."/>
            <person name="Simionati B."/>
            <person name="Conrad A."/>
            <person name="Hornischer K."/>
            <person name="Kauer G."/>
            <person name="Loehnert T.-H."/>
            <person name="Nordsiek G."/>
            <person name="Reichelt J."/>
            <person name="Scharfe M."/>
            <person name="Schoen O."/>
            <person name="Bargues M."/>
            <person name="Terol J."/>
            <person name="Climent J."/>
            <person name="Navarro P."/>
            <person name="Collado C."/>
            <person name="Perez-Perez A."/>
            <person name="Ottenwaelder B."/>
            <person name="Duchemin D."/>
            <person name="Cooke R."/>
            <person name="Laudie M."/>
            <person name="Berger-Llauro C."/>
            <person name="Purnelle B."/>
            <person name="Masuy D."/>
            <person name="de Haan M."/>
            <person name="Maarse A.C."/>
            <person name="Alcaraz J.-P."/>
            <person name="Cottet A."/>
            <person name="Casacuberta E."/>
            <person name="Monfort A."/>
            <person name="Argiriou A."/>
            <person name="Flores M."/>
            <person name="Liguori R."/>
            <person name="Vitale D."/>
            <person name="Mannhaupt G."/>
            <person name="Haase D."/>
            <person name="Schoof H."/>
            <person name="Rudd S."/>
            <person name="Zaccaria P."/>
            <person name="Mewes H.-W."/>
            <person name="Mayer K.F.X."/>
            <person name="Kaul S."/>
            <person name="Town C.D."/>
            <person name="Koo H.L."/>
            <person name="Tallon L.J."/>
            <person name="Jenkins J."/>
            <person name="Rooney T."/>
            <person name="Rizzo M."/>
            <person name="Walts A."/>
            <person name="Utterback T."/>
            <person name="Fujii C.Y."/>
            <person name="Shea T.P."/>
            <person name="Creasy T.H."/>
            <person name="Haas B."/>
            <person name="Maiti R."/>
            <person name="Wu D."/>
            <person name="Peterson J."/>
            <person name="Van Aken S."/>
            <person name="Pai G."/>
            <person name="Militscher J."/>
            <person name="Sellers P."/>
            <person name="Gill J.E."/>
            <person name="Feldblyum T.V."/>
            <person name="Preuss D."/>
            <person name="Lin X."/>
            <person name="Nierman W.C."/>
            <person name="Salzberg S.L."/>
            <person name="White O."/>
            <person name="Venter J.C."/>
            <person name="Fraser C.M."/>
            <person name="Kaneko T."/>
            <person name="Nakamura Y."/>
            <person name="Sato S."/>
            <person name="Kato T."/>
            <person name="Asamizu E."/>
            <person name="Sasamoto S."/>
            <person name="Kimura T."/>
            <person name="Idesawa K."/>
            <person name="Kawashima K."/>
            <person name="Kishida Y."/>
            <person name="Kiyokawa C."/>
            <person name="Kohara M."/>
            <person name="Matsumoto M."/>
            <person name="Matsuno A."/>
            <person name="Muraki A."/>
            <person name="Nakayama S."/>
            <person name="Nakazaki N."/>
            <person name="Shinpo S."/>
            <person name="Takeuchi C."/>
            <person name="Wada T."/>
            <person name="Watanabe A."/>
            <person name="Yamada M."/>
            <person name="Yasuda M."/>
            <person name="Tabata S."/>
        </authorList>
    </citation>
    <scope>NUCLEOTIDE SEQUENCE [LARGE SCALE GENOMIC DNA]</scope>
    <source>
        <strain>cv. Columbia</strain>
    </source>
</reference>
<reference key="2">
    <citation type="journal article" date="2017" name="Plant J.">
        <title>Araport11: a complete reannotation of the Arabidopsis thaliana reference genome.</title>
        <authorList>
            <person name="Cheng C.Y."/>
            <person name="Krishnakumar V."/>
            <person name="Chan A.P."/>
            <person name="Thibaud-Nissen F."/>
            <person name="Schobel S."/>
            <person name="Town C.D."/>
        </authorList>
    </citation>
    <scope>GENOME REANNOTATION</scope>
    <source>
        <strain>cv. Columbia</strain>
    </source>
</reference>
<reference key="3">
    <citation type="journal article" date="2001" name="J. Biol. Chem.">
        <title>The Arabidopsis thaliana ABC protein superfamily, a complete inventory.</title>
        <authorList>
            <person name="Sanchez-Fernandez R."/>
            <person name="Davies T.G."/>
            <person name="Coleman J.O."/>
            <person name="Rea P.A."/>
        </authorList>
    </citation>
    <scope>GENE FAMILY</scope>
    <scope>NOMENCLATURE</scope>
</reference>
<reference key="4">
    <citation type="journal article" date="2002" name="Planta">
        <title>Multifunctionality of plant ABC transporters -- more than just detoxifiers.</title>
        <authorList>
            <person name="Martinoia E."/>
            <person name="Klein M."/>
            <person name="Geisler M."/>
            <person name="Bovet L."/>
            <person name="Forestier C."/>
            <person name="Kolukisaoglu H.U."/>
            <person name="Mueller-Roeber B."/>
            <person name="Schulz B."/>
        </authorList>
    </citation>
    <scope>GENE FAMILY</scope>
</reference>
<reference key="5">
    <citation type="journal article" date="2002" name="Planta">
        <title>Family business: the multidrug-resistance related protein (MRP) ABC transporter genes in Arabidopsis thaliana.</title>
        <authorList>
            <person name="Kolukisaoglu U.H."/>
            <person name="Bovet L."/>
            <person name="Klein M."/>
            <person name="Eggmann T."/>
            <person name="Geisler M."/>
            <person name="Wanke D."/>
            <person name="Martinoia E."/>
            <person name="Schulz B."/>
        </authorList>
    </citation>
    <scope>TISSUE SPECIFICITY</scope>
</reference>
<reference key="6">
    <citation type="journal article" date="2008" name="Trends Plant Sci.">
        <title>Plant ABC proteins - a unified nomenclature and updated inventory.</title>
        <authorList>
            <person name="Verrier P.J."/>
            <person name="Bird D."/>
            <person name="Burla B."/>
            <person name="Dassa E."/>
            <person name="Forestier C."/>
            <person name="Geisler M."/>
            <person name="Klein M."/>
            <person name="Kolukisaoglu H.U."/>
            <person name="Lee Y."/>
            <person name="Martinoia E."/>
            <person name="Murphy A."/>
            <person name="Rea P.A."/>
            <person name="Samuels L."/>
            <person name="Schulz B."/>
            <person name="Spalding E.J."/>
            <person name="Yazaki K."/>
            <person name="Theodoulou F.L."/>
        </authorList>
    </citation>
    <scope>GENE FAMILY</scope>
    <scope>NOMENCLATURE</scope>
</reference>
<gene>
    <name type="primary">ABCC9</name>
    <name type="synonym">MRP9</name>
    <name type="ordered locus">At3g60160</name>
    <name type="ORF">T2O9.140</name>
</gene>
<evidence type="ECO:0000250" key="1"/>
<evidence type="ECO:0000255" key="2">
    <source>
        <dbReference type="PROSITE-ProRule" id="PRU00434"/>
    </source>
</evidence>
<evidence type="ECO:0000255" key="3">
    <source>
        <dbReference type="PROSITE-ProRule" id="PRU00441"/>
    </source>
</evidence>
<evidence type="ECO:0000269" key="4">
    <source>
    </source>
</evidence>
<evidence type="ECO:0000305" key="5"/>
<protein>
    <recommendedName>
        <fullName>ABC transporter C family member 9</fullName>
        <shortName>ABC transporter ABCC.9</shortName>
        <shortName>AtABCC9</shortName>
        <ecNumber>7.6.2.2</ecNumber>
    </recommendedName>
    <alternativeName>
        <fullName>ATP-energized glutathione S-conjugate pump 9</fullName>
    </alternativeName>
    <alternativeName>
        <fullName>Glutathione S-conjugate-transporting ATPase 9</fullName>
    </alternativeName>
    <alternativeName>
        <fullName>Multidrug resistance-associated protein 9</fullName>
    </alternativeName>
</protein>
<keyword id="KW-0067">ATP-binding</keyword>
<keyword id="KW-0472">Membrane</keyword>
<keyword id="KW-0547">Nucleotide-binding</keyword>
<keyword id="KW-1185">Reference proteome</keyword>
<keyword id="KW-0677">Repeat</keyword>
<keyword id="KW-1278">Translocase</keyword>
<keyword id="KW-0812">Transmembrane</keyword>
<keyword id="KW-1133">Transmembrane helix</keyword>
<keyword id="KW-0813">Transport</keyword>
<accession>Q9M1C7</accession>
<accession>F4JAM7</accession>
<dbReference type="EC" id="7.6.2.2"/>
<dbReference type="EMBL" id="AL138658">
    <property type="protein sequence ID" value="CAB75931.1"/>
    <property type="status" value="ALT_SEQ"/>
    <property type="molecule type" value="Genomic_DNA"/>
</dbReference>
<dbReference type="EMBL" id="CP002686">
    <property type="protein sequence ID" value="AEE80019.1"/>
    <property type="molecule type" value="Genomic_DNA"/>
</dbReference>
<dbReference type="PIR" id="T47840">
    <property type="entry name" value="T47840"/>
</dbReference>
<dbReference type="RefSeq" id="NP_191575.2">
    <property type="nucleotide sequence ID" value="NM_115879.7"/>
</dbReference>
<dbReference type="SMR" id="Q9M1C7"/>
<dbReference type="STRING" id="3702.Q9M1C7"/>
<dbReference type="iPTMnet" id="Q9M1C7"/>
<dbReference type="PaxDb" id="3702-AT3G60160.1"/>
<dbReference type="ProteomicsDB" id="244633"/>
<dbReference type="EnsemblPlants" id="AT3G60160.1">
    <property type="protein sequence ID" value="AT3G60160.1"/>
    <property type="gene ID" value="AT3G60160"/>
</dbReference>
<dbReference type="GeneID" id="825186"/>
<dbReference type="Gramene" id="AT3G60160.1">
    <property type="protein sequence ID" value="AT3G60160.1"/>
    <property type="gene ID" value="AT3G60160"/>
</dbReference>
<dbReference type="KEGG" id="ath:AT3G60160"/>
<dbReference type="Araport" id="AT3G60160"/>
<dbReference type="TAIR" id="AT3G60160">
    <property type="gene designation" value="ABCC9"/>
</dbReference>
<dbReference type="eggNOG" id="KOG0054">
    <property type="taxonomic scope" value="Eukaryota"/>
</dbReference>
<dbReference type="HOGENOM" id="CLU_000604_27_0_1"/>
<dbReference type="InParanoid" id="Q9M1C7"/>
<dbReference type="BioCyc" id="ARA:AT3G60160-MONOMER"/>
<dbReference type="PRO" id="PR:Q9M1C7"/>
<dbReference type="Proteomes" id="UP000006548">
    <property type="component" value="Chromosome 3"/>
</dbReference>
<dbReference type="ExpressionAtlas" id="Q9M1C7">
    <property type="expression patterns" value="baseline and differential"/>
</dbReference>
<dbReference type="GO" id="GO:0016020">
    <property type="term" value="C:membrane"/>
    <property type="evidence" value="ECO:0007669"/>
    <property type="project" value="UniProtKB-SubCell"/>
</dbReference>
<dbReference type="GO" id="GO:0009506">
    <property type="term" value="C:plasmodesma"/>
    <property type="evidence" value="ECO:0007005"/>
    <property type="project" value="TAIR"/>
</dbReference>
<dbReference type="GO" id="GO:0008559">
    <property type="term" value="F:ABC-type xenobiotic transporter activity"/>
    <property type="evidence" value="ECO:0007669"/>
    <property type="project" value="UniProtKB-EC"/>
</dbReference>
<dbReference type="GO" id="GO:0005524">
    <property type="term" value="F:ATP binding"/>
    <property type="evidence" value="ECO:0007669"/>
    <property type="project" value="UniProtKB-KW"/>
</dbReference>
<dbReference type="GO" id="GO:0016887">
    <property type="term" value="F:ATP hydrolysis activity"/>
    <property type="evidence" value="ECO:0007669"/>
    <property type="project" value="InterPro"/>
</dbReference>
<dbReference type="GO" id="GO:0042626">
    <property type="term" value="F:ATPase-coupled transmembrane transporter activity"/>
    <property type="evidence" value="ECO:0000250"/>
    <property type="project" value="TAIR"/>
</dbReference>
<dbReference type="GO" id="GO:0009624">
    <property type="term" value="P:response to nematode"/>
    <property type="evidence" value="ECO:0007007"/>
    <property type="project" value="TAIR"/>
</dbReference>
<dbReference type="CDD" id="cd18579">
    <property type="entry name" value="ABC_6TM_ABCC_D1"/>
    <property type="match status" value="1"/>
</dbReference>
<dbReference type="CDD" id="cd18580">
    <property type="entry name" value="ABC_6TM_ABCC_D2"/>
    <property type="match status" value="1"/>
</dbReference>
<dbReference type="CDD" id="cd03250">
    <property type="entry name" value="ABCC_MRP_domain1"/>
    <property type="match status" value="1"/>
</dbReference>
<dbReference type="CDD" id="cd03244">
    <property type="entry name" value="ABCC_MRP_domain2"/>
    <property type="match status" value="1"/>
</dbReference>
<dbReference type="FunFam" id="1.20.1560.10:FF:000003">
    <property type="entry name" value="ABC transporter C family member 10"/>
    <property type="match status" value="1"/>
</dbReference>
<dbReference type="FunFam" id="3.40.50.300:FF:000169">
    <property type="entry name" value="ABC transporter C family member 3"/>
    <property type="match status" value="1"/>
</dbReference>
<dbReference type="FunFam" id="1.20.1560.10:FF:000002">
    <property type="entry name" value="ABC transporter C family member 5"/>
    <property type="match status" value="1"/>
</dbReference>
<dbReference type="FunFam" id="3.40.50.300:FF:000508">
    <property type="entry name" value="ABC transporter C family member 5"/>
    <property type="match status" value="1"/>
</dbReference>
<dbReference type="Gene3D" id="1.20.1560.10">
    <property type="entry name" value="ABC transporter type 1, transmembrane domain"/>
    <property type="match status" value="2"/>
</dbReference>
<dbReference type="Gene3D" id="3.40.50.300">
    <property type="entry name" value="P-loop containing nucleotide triphosphate hydrolases"/>
    <property type="match status" value="2"/>
</dbReference>
<dbReference type="InterPro" id="IPR003593">
    <property type="entry name" value="AAA+_ATPase"/>
</dbReference>
<dbReference type="InterPro" id="IPR011527">
    <property type="entry name" value="ABC1_TM_dom"/>
</dbReference>
<dbReference type="InterPro" id="IPR036640">
    <property type="entry name" value="ABC1_TM_sf"/>
</dbReference>
<dbReference type="InterPro" id="IPR003439">
    <property type="entry name" value="ABC_transporter-like_ATP-bd"/>
</dbReference>
<dbReference type="InterPro" id="IPR017871">
    <property type="entry name" value="ABC_transporter-like_CS"/>
</dbReference>
<dbReference type="InterPro" id="IPR050173">
    <property type="entry name" value="ABC_transporter_C-like"/>
</dbReference>
<dbReference type="InterPro" id="IPR044746">
    <property type="entry name" value="ABCC_6TM_D1"/>
</dbReference>
<dbReference type="InterPro" id="IPR044726">
    <property type="entry name" value="ABCC_6TM_D2"/>
</dbReference>
<dbReference type="InterPro" id="IPR027417">
    <property type="entry name" value="P-loop_NTPase"/>
</dbReference>
<dbReference type="PANTHER" id="PTHR24223:SF165">
    <property type="entry name" value="ABC TRANSPORTER C FAMILY MEMBER 15-RELATED"/>
    <property type="match status" value="1"/>
</dbReference>
<dbReference type="PANTHER" id="PTHR24223">
    <property type="entry name" value="ATP-BINDING CASSETTE SUB-FAMILY C"/>
    <property type="match status" value="1"/>
</dbReference>
<dbReference type="Pfam" id="PF00664">
    <property type="entry name" value="ABC_membrane"/>
    <property type="match status" value="2"/>
</dbReference>
<dbReference type="Pfam" id="PF00005">
    <property type="entry name" value="ABC_tran"/>
    <property type="match status" value="2"/>
</dbReference>
<dbReference type="SMART" id="SM00382">
    <property type="entry name" value="AAA"/>
    <property type="match status" value="2"/>
</dbReference>
<dbReference type="SUPFAM" id="SSF90123">
    <property type="entry name" value="ABC transporter transmembrane region"/>
    <property type="match status" value="2"/>
</dbReference>
<dbReference type="SUPFAM" id="SSF52540">
    <property type="entry name" value="P-loop containing nucleoside triphosphate hydrolases"/>
    <property type="match status" value="2"/>
</dbReference>
<dbReference type="PROSITE" id="PS50929">
    <property type="entry name" value="ABC_TM1F"/>
    <property type="match status" value="2"/>
</dbReference>
<dbReference type="PROSITE" id="PS00211">
    <property type="entry name" value="ABC_TRANSPORTER_1"/>
    <property type="match status" value="1"/>
</dbReference>
<dbReference type="PROSITE" id="PS50893">
    <property type="entry name" value="ABC_TRANSPORTER_2"/>
    <property type="match status" value="2"/>
</dbReference>
<proteinExistence type="evidence at transcript level"/>